<protein>
    <recommendedName>
        <fullName evidence="1">Chaperone protein HscA</fullName>
    </recommendedName>
    <alternativeName>
        <fullName evidence="1">Hsc66</fullName>
    </alternativeName>
</protein>
<name>HSCA_YERPS</name>
<gene>
    <name evidence="1" type="primary">hscA</name>
    <name type="ordered locus">YPTB2855</name>
</gene>
<keyword id="KW-0067">ATP-binding</keyword>
<keyword id="KW-0143">Chaperone</keyword>
<keyword id="KW-0547">Nucleotide-binding</keyword>
<proteinExistence type="inferred from homology"/>
<accession>Q667Y5</accession>
<comment type="function">
    <text evidence="1">Chaperone involved in the maturation of iron-sulfur cluster-containing proteins. Has a low intrinsic ATPase activity which is markedly stimulated by HscB. Involved in the maturation of IscU.</text>
</comment>
<comment type="similarity">
    <text evidence="1">Belongs to the heat shock protein 70 family.</text>
</comment>
<reference key="1">
    <citation type="journal article" date="2004" name="Proc. Natl. Acad. Sci. U.S.A.">
        <title>Insights into the evolution of Yersinia pestis through whole-genome comparison with Yersinia pseudotuberculosis.</title>
        <authorList>
            <person name="Chain P.S.G."/>
            <person name="Carniel E."/>
            <person name="Larimer F.W."/>
            <person name="Lamerdin J."/>
            <person name="Stoutland P.O."/>
            <person name="Regala W.M."/>
            <person name="Georgescu A.M."/>
            <person name="Vergez L.M."/>
            <person name="Land M.L."/>
            <person name="Motin V.L."/>
            <person name="Brubaker R.R."/>
            <person name="Fowler J."/>
            <person name="Hinnebusch J."/>
            <person name="Marceau M."/>
            <person name="Medigue C."/>
            <person name="Simonet M."/>
            <person name="Chenal-Francisque V."/>
            <person name="Souza B."/>
            <person name="Dacheux D."/>
            <person name="Elliott J.M."/>
            <person name="Derbise A."/>
            <person name="Hauser L.J."/>
            <person name="Garcia E."/>
        </authorList>
    </citation>
    <scope>NUCLEOTIDE SEQUENCE [LARGE SCALE GENOMIC DNA]</scope>
    <source>
        <strain>IP32953</strain>
    </source>
</reference>
<organism>
    <name type="scientific">Yersinia pseudotuberculosis serotype I (strain IP32953)</name>
    <dbReference type="NCBI Taxonomy" id="273123"/>
    <lineage>
        <taxon>Bacteria</taxon>
        <taxon>Pseudomonadati</taxon>
        <taxon>Pseudomonadota</taxon>
        <taxon>Gammaproteobacteria</taxon>
        <taxon>Enterobacterales</taxon>
        <taxon>Yersiniaceae</taxon>
        <taxon>Yersinia</taxon>
    </lineage>
</organism>
<feature type="chain" id="PRO_0000078658" description="Chaperone protein HscA">
    <location>
        <begin position="1"/>
        <end position="644"/>
    </location>
</feature>
<dbReference type="EMBL" id="BX936398">
    <property type="protein sequence ID" value="CAH22093.1"/>
    <property type="molecule type" value="Genomic_DNA"/>
</dbReference>
<dbReference type="RefSeq" id="WP_011192811.1">
    <property type="nucleotide sequence ID" value="NC_006155.1"/>
</dbReference>
<dbReference type="SMR" id="Q667Y5"/>
<dbReference type="KEGG" id="ypo:BZ17_3776"/>
<dbReference type="KEGG" id="yps:YPTB2855"/>
<dbReference type="PATRIC" id="fig|273123.14.peg.3962"/>
<dbReference type="Proteomes" id="UP000001011">
    <property type="component" value="Chromosome"/>
</dbReference>
<dbReference type="GO" id="GO:0005524">
    <property type="term" value="F:ATP binding"/>
    <property type="evidence" value="ECO:0007669"/>
    <property type="project" value="UniProtKB-KW"/>
</dbReference>
<dbReference type="GO" id="GO:0016887">
    <property type="term" value="F:ATP hydrolysis activity"/>
    <property type="evidence" value="ECO:0007669"/>
    <property type="project" value="UniProtKB-UniRule"/>
</dbReference>
<dbReference type="GO" id="GO:0140662">
    <property type="term" value="F:ATP-dependent protein folding chaperone"/>
    <property type="evidence" value="ECO:0007669"/>
    <property type="project" value="InterPro"/>
</dbReference>
<dbReference type="GO" id="GO:0051082">
    <property type="term" value="F:unfolded protein binding"/>
    <property type="evidence" value="ECO:0007669"/>
    <property type="project" value="InterPro"/>
</dbReference>
<dbReference type="GO" id="GO:0016226">
    <property type="term" value="P:iron-sulfur cluster assembly"/>
    <property type="evidence" value="ECO:0007669"/>
    <property type="project" value="InterPro"/>
</dbReference>
<dbReference type="CDD" id="cd10236">
    <property type="entry name" value="ASKHA_NBD_HSP70_HscA"/>
    <property type="match status" value="1"/>
</dbReference>
<dbReference type="FunFam" id="3.30.420.40:FF:000046">
    <property type="entry name" value="Chaperone protein HscA"/>
    <property type="match status" value="1"/>
</dbReference>
<dbReference type="FunFam" id="3.90.640.10:FF:000013">
    <property type="entry name" value="Chaperone protein HscA"/>
    <property type="match status" value="1"/>
</dbReference>
<dbReference type="FunFam" id="2.60.34.10:FF:000005">
    <property type="entry name" value="Chaperone protein HscA homolog"/>
    <property type="match status" value="1"/>
</dbReference>
<dbReference type="Gene3D" id="1.20.1270.10">
    <property type="match status" value="1"/>
</dbReference>
<dbReference type="Gene3D" id="3.30.420.40">
    <property type="match status" value="2"/>
</dbReference>
<dbReference type="Gene3D" id="3.90.640.10">
    <property type="entry name" value="Actin, Chain A, domain 4"/>
    <property type="match status" value="1"/>
</dbReference>
<dbReference type="Gene3D" id="2.60.34.10">
    <property type="entry name" value="Substrate Binding Domain Of DNAk, Chain A, domain 1"/>
    <property type="match status" value="1"/>
</dbReference>
<dbReference type="HAMAP" id="MF_00679">
    <property type="entry name" value="HscA"/>
    <property type="match status" value="1"/>
</dbReference>
<dbReference type="InterPro" id="IPR043129">
    <property type="entry name" value="ATPase_NBD"/>
</dbReference>
<dbReference type="InterPro" id="IPR018181">
    <property type="entry name" value="Heat_shock_70_CS"/>
</dbReference>
<dbReference type="InterPro" id="IPR042039">
    <property type="entry name" value="HscA_NBD"/>
</dbReference>
<dbReference type="InterPro" id="IPR029048">
    <property type="entry name" value="HSP70_C_sf"/>
</dbReference>
<dbReference type="InterPro" id="IPR029047">
    <property type="entry name" value="HSP70_peptide-bd_sf"/>
</dbReference>
<dbReference type="InterPro" id="IPR013126">
    <property type="entry name" value="Hsp_70_fam"/>
</dbReference>
<dbReference type="InterPro" id="IPR010236">
    <property type="entry name" value="ISC_FeS_clus_asmbl_HscA"/>
</dbReference>
<dbReference type="NCBIfam" id="TIGR01991">
    <property type="entry name" value="HscA"/>
    <property type="match status" value="1"/>
</dbReference>
<dbReference type="NCBIfam" id="NF003520">
    <property type="entry name" value="PRK05183.1"/>
    <property type="match status" value="1"/>
</dbReference>
<dbReference type="PANTHER" id="PTHR19375">
    <property type="entry name" value="HEAT SHOCK PROTEIN 70KDA"/>
    <property type="match status" value="1"/>
</dbReference>
<dbReference type="Pfam" id="PF00012">
    <property type="entry name" value="HSP70"/>
    <property type="match status" value="1"/>
</dbReference>
<dbReference type="PRINTS" id="PR00301">
    <property type="entry name" value="HEATSHOCK70"/>
</dbReference>
<dbReference type="SUPFAM" id="SSF53067">
    <property type="entry name" value="Actin-like ATPase domain"/>
    <property type="match status" value="2"/>
</dbReference>
<dbReference type="SUPFAM" id="SSF100934">
    <property type="entry name" value="Heat shock protein 70kD (HSP70), C-terminal subdomain"/>
    <property type="match status" value="1"/>
</dbReference>
<dbReference type="SUPFAM" id="SSF100920">
    <property type="entry name" value="Heat shock protein 70kD (HSP70), peptide-binding domain"/>
    <property type="match status" value="1"/>
</dbReference>
<dbReference type="PROSITE" id="PS00297">
    <property type="entry name" value="HSP70_1"/>
    <property type="match status" value="1"/>
</dbReference>
<dbReference type="PROSITE" id="PS00329">
    <property type="entry name" value="HSP70_2"/>
    <property type="match status" value="1"/>
</dbReference>
<dbReference type="PROSITE" id="PS01036">
    <property type="entry name" value="HSP70_3"/>
    <property type="match status" value="1"/>
</dbReference>
<sequence>MALLQISEPGLTAAPHQRRLAAGIDLGTTNSLVATVRSGKAQTLADEQLADEQLIAGEQLIAGEQLIAGQQLINEKQRDLLPSVVHYHPQGIDVGWKARNLAALDPVNTISSVKRMMGRSLADIVQRYPNLPYQFHASENGLPMIQTARGLVNPVQVSAEILKTLAQRAQAALAGELDGVVITVPAYFDDAQRQGTKDAARLAGLHVLRLLNEPTAAAIAYGLDSGQEGVIAVYDLGGGTFDISILRLSRGVFEVLATGGDSALGGDDFDHLLADWLREQAGVATRDDHGIQRQLLDTAIAAKIALSEAETAVVSVAGWQGEVTREQLESLIAPLVKRTLMACRRALKDAGVTADEILEVVMVGGSTRVPLVREQVGQFFGRTPLTSIDPDKVVAIGAAIQADILVGNKPDSDMLLLDVIPLSLGLETMGGLVEKVIPRNTTIPAARAQEFTTFKDGQSAMMIHVLQGERELVKDCRSLARFTLRGLPPLPAGGAHIRVTFQVDADGLLSVTAMEKSTGVEASIQVKPSYGLSDDEIANMIKDSMANAQSDITARKLAEQQVDAARVLESLQGALAEDAALLSEQESAAIAQAVALLQQQMQGSDPQAIEAATKALDAQTQDFAARRMDASIRRALAGHSVDEV</sequence>
<evidence type="ECO:0000255" key="1">
    <source>
        <dbReference type="HAMAP-Rule" id="MF_00679"/>
    </source>
</evidence>